<organism>
    <name type="scientific">Desulfitobacterium hafniense (strain Y51)</name>
    <dbReference type="NCBI Taxonomy" id="138119"/>
    <lineage>
        <taxon>Bacteria</taxon>
        <taxon>Bacillati</taxon>
        <taxon>Bacillota</taxon>
        <taxon>Clostridia</taxon>
        <taxon>Eubacteriales</taxon>
        <taxon>Desulfitobacteriaceae</taxon>
        <taxon>Desulfitobacterium</taxon>
    </lineage>
</organism>
<keyword id="KW-1185">Reference proteome</keyword>
<keyword id="KW-0687">Ribonucleoprotein</keyword>
<keyword id="KW-0689">Ribosomal protein</keyword>
<keyword id="KW-0694">RNA-binding</keyword>
<keyword id="KW-0699">rRNA-binding</keyword>
<proteinExistence type="inferred from homology"/>
<protein>
    <recommendedName>
        <fullName evidence="1">Small ribosomal subunit protein bS20</fullName>
    </recommendedName>
    <alternativeName>
        <fullName evidence="2">30S ribosomal protein S20</fullName>
    </alternativeName>
</protein>
<name>RS20_DESHY</name>
<gene>
    <name evidence="1" type="primary">rpsT</name>
    <name type="ordered locus">DSY3145</name>
</gene>
<feature type="chain" id="PRO_0000260116" description="Small ribosomal subunit protein bS20">
    <location>
        <begin position="1"/>
        <end position="90"/>
    </location>
</feature>
<evidence type="ECO:0000255" key="1">
    <source>
        <dbReference type="HAMAP-Rule" id="MF_00500"/>
    </source>
</evidence>
<evidence type="ECO:0000305" key="2"/>
<comment type="function">
    <text evidence="1">Binds directly to 16S ribosomal RNA.</text>
</comment>
<comment type="similarity">
    <text evidence="1">Belongs to the bacterial ribosomal protein bS20 family.</text>
</comment>
<dbReference type="EMBL" id="AP008230">
    <property type="protein sequence ID" value="BAE84934.1"/>
    <property type="molecule type" value="Genomic_DNA"/>
</dbReference>
<dbReference type="RefSeq" id="WP_005816503.1">
    <property type="nucleotide sequence ID" value="NC_007907.1"/>
</dbReference>
<dbReference type="SMR" id="Q24SQ8"/>
<dbReference type="STRING" id="138119.DSY3145"/>
<dbReference type="KEGG" id="dsy:DSY3145"/>
<dbReference type="eggNOG" id="COG0268">
    <property type="taxonomic scope" value="Bacteria"/>
</dbReference>
<dbReference type="HOGENOM" id="CLU_160655_1_0_9"/>
<dbReference type="Proteomes" id="UP000001946">
    <property type="component" value="Chromosome"/>
</dbReference>
<dbReference type="GO" id="GO:0005829">
    <property type="term" value="C:cytosol"/>
    <property type="evidence" value="ECO:0007669"/>
    <property type="project" value="TreeGrafter"/>
</dbReference>
<dbReference type="GO" id="GO:0015935">
    <property type="term" value="C:small ribosomal subunit"/>
    <property type="evidence" value="ECO:0007669"/>
    <property type="project" value="TreeGrafter"/>
</dbReference>
<dbReference type="GO" id="GO:0070181">
    <property type="term" value="F:small ribosomal subunit rRNA binding"/>
    <property type="evidence" value="ECO:0007669"/>
    <property type="project" value="TreeGrafter"/>
</dbReference>
<dbReference type="GO" id="GO:0003735">
    <property type="term" value="F:structural constituent of ribosome"/>
    <property type="evidence" value="ECO:0007669"/>
    <property type="project" value="InterPro"/>
</dbReference>
<dbReference type="GO" id="GO:0006412">
    <property type="term" value="P:translation"/>
    <property type="evidence" value="ECO:0007669"/>
    <property type="project" value="UniProtKB-UniRule"/>
</dbReference>
<dbReference type="FunFam" id="1.20.58.110:FF:000001">
    <property type="entry name" value="30S ribosomal protein S20"/>
    <property type="match status" value="1"/>
</dbReference>
<dbReference type="Gene3D" id="1.20.58.110">
    <property type="entry name" value="Ribosomal protein S20"/>
    <property type="match status" value="1"/>
</dbReference>
<dbReference type="HAMAP" id="MF_00500">
    <property type="entry name" value="Ribosomal_bS20"/>
    <property type="match status" value="1"/>
</dbReference>
<dbReference type="InterPro" id="IPR002583">
    <property type="entry name" value="Ribosomal_bS20"/>
</dbReference>
<dbReference type="InterPro" id="IPR036510">
    <property type="entry name" value="Ribosomal_bS20_sf"/>
</dbReference>
<dbReference type="NCBIfam" id="TIGR00029">
    <property type="entry name" value="S20"/>
    <property type="match status" value="1"/>
</dbReference>
<dbReference type="PANTHER" id="PTHR33398">
    <property type="entry name" value="30S RIBOSOMAL PROTEIN S20"/>
    <property type="match status" value="1"/>
</dbReference>
<dbReference type="PANTHER" id="PTHR33398:SF1">
    <property type="entry name" value="SMALL RIBOSOMAL SUBUNIT PROTEIN BS20C"/>
    <property type="match status" value="1"/>
</dbReference>
<dbReference type="Pfam" id="PF01649">
    <property type="entry name" value="Ribosomal_S20p"/>
    <property type="match status" value="1"/>
</dbReference>
<dbReference type="SUPFAM" id="SSF46992">
    <property type="entry name" value="Ribosomal protein S20"/>
    <property type="match status" value="1"/>
</dbReference>
<sequence>MPNIKSAIKRVEIAKVRTIKNAAAKSTLRTTIRRFEESLSTDAETAKLALNKATRALDKASSKGLVHKNTAARKKSRLTKRYAKQFAQVG</sequence>
<accession>Q24SQ8</accession>
<reference key="1">
    <citation type="journal article" date="2006" name="J. Bacteriol.">
        <title>Complete genome sequence of the dehalorespiring bacterium Desulfitobacterium hafniense Y51 and comparison with Dehalococcoides ethenogenes 195.</title>
        <authorList>
            <person name="Nonaka H."/>
            <person name="Keresztes G."/>
            <person name="Shinoda Y."/>
            <person name="Ikenaga Y."/>
            <person name="Abe M."/>
            <person name="Naito K."/>
            <person name="Inatomi K."/>
            <person name="Furukawa K."/>
            <person name="Inui M."/>
            <person name="Yukawa H."/>
        </authorList>
    </citation>
    <scope>NUCLEOTIDE SEQUENCE [LARGE SCALE GENOMIC DNA]</scope>
    <source>
        <strain>Y51</strain>
    </source>
</reference>